<accession>B5BCZ5</accession>
<proteinExistence type="inferred from homology"/>
<gene>
    <name evidence="1" type="primary">folD</name>
    <name type="ordered locus">SSPA2029</name>
</gene>
<dbReference type="EC" id="1.5.1.5" evidence="1"/>
<dbReference type="EC" id="3.5.4.9" evidence="1"/>
<dbReference type="EMBL" id="FM200053">
    <property type="protein sequence ID" value="CAR60236.1"/>
    <property type="molecule type" value="Genomic_DNA"/>
</dbReference>
<dbReference type="RefSeq" id="WP_000729165.1">
    <property type="nucleotide sequence ID" value="NC_011147.1"/>
</dbReference>
<dbReference type="SMR" id="B5BCZ5"/>
<dbReference type="KEGG" id="sek:SSPA2029"/>
<dbReference type="HOGENOM" id="CLU_034045_2_1_6"/>
<dbReference type="UniPathway" id="UPA00193"/>
<dbReference type="Proteomes" id="UP000001869">
    <property type="component" value="Chromosome"/>
</dbReference>
<dbReference type="GO" id="GO:0005829">
    <property type="term" value="C:cytosol"/>
    <property type="evidence" value="ECO:0007669"/>
    <property type="project" value="TreeGrafter"/>
</dbReference>
<dbReference type="GO" id="GO:0004477">
    <property type="term" value="F:methenyltetrahydrofolate cyclohydrolase activity"/>
    <property type="evidence" value="ECO:0007669"/>
    <property type="project" value="UniProtKB-UniRule"/>
</dbReference>
<dbReference type="GO" id="GO:0004488">
    <property type="term" value="F:methylenetetrahydrofolate dehydrogenase (NADP+) activity"/>
    <property type="evidence" value="ECO:0007669"/>
    <property type="project" value="UniProtKB-UniRule"/>
</dbReference>
<dbReference type="GO" id="GO:0000105">
    <property type="term" value="P:L-histidine biosynthetic process"/>
    <property type="evidence" value="ECO:0007669"/>
    <property type="project" value="UniProtKB-KW"/>
</dbReference>
<dbReference type="GO" id="GO:0009086">
    <property type="term" value="P:methionine biosynthetic process"/>
    <property type="evidence" value="ECO:0007669"/>
    <property type="project" value="UniProtKB-KW"/>
</dbReference>
<dbReference type="GO" id="GO:0006164">
    <property type="term" value="P:purine nucleotide biosynthetic process"/>
    <property type="evidence" value="ECO:0007669"/>
    <property type="project" value="UniProtKB-KW"/>
</dbReference>
<dbReference type="GO" id="GO:0035999">
    <property type="term" value="P:tetrahydrofolate interconversion"/>
    <property type="evidence" value="ECO:0007669"/>
    <property type="project" value="UniProtKB-UniRule"/>
</dbReference>
<dbReference type="CDD" id="cd01080">
    <property type="entry name" value="NAD_bind_m-THF_DH_Cyclohyd"/>
    <property type="match status" value="1"/>
</dbReference>
<dbReference type="FunFam" id="3.40.50.10860:FF:000001">
    <property type="entry name" value="Bifunctional protein FolD"/>
    <property type="match status" value="1"/>
</dbReference>
<dbReference type="FunFam" id="3.40.50.720:FF:000006">
    <property type="entry name" value="Bifunctional protein FolD"/>
    <property type="match status" value="1"/>
</dbReference>
<dbReference type="Gene3D" id="3.40.50.10860">
    <property type="entry name" value="Leucine Dehydrogenase, chain A, domain 1"/>
    <property type="match status" value="1"/>
</dbReference>
<dbReference type="Gene3D" id="3.40.50.720">
    <property type="entry name" value="NAD(P)-binding Rossmann-like Domain"/>
    <property type="match status" value="1"/>
</dbReference>
<dbReference type="HAMAP" id="MF_01576">
    <property type="entry name" value="THF_DHG_CYH"/>
    <property type="match status" value="1"/>
</dbReference>
<dbReference type="InterPro" id="IPR046346">
    <property type="entry name" value="Aminoacid_DH-like_N_sf"/>
</dbReference>
<dbReference type="InterPro" id="IPR036291">
    <property type="entry name" value="NAD(P)-bd_dom_sf"/>
</dbReference>
<dbReference type="InterPro" id="IPR000672">
    <property type="entry name" value="THF_DH/CycHdrlase"/>
</dbReference>
<dbReference type="InterPro" id="IPR020630">
    <property type="entry name" value="THF_DH/CycHdrlase_cat_dom"/>
</dbReference>
<dbReference type="InterPro" id="IPR020867">
    <property type="entry name" value="THF_DH/CycHdrlase_CS"/>
</dbReference>
<dbReference type="InterPro" id="IPR020631">
    <property type="entry name" value="THF_DH/CycHdrlase_NAD-bd_dom"/>
</dbReference>
<dbReference type="NCBIfam" id="NF008058">
    <property type="entry name" value="PRK10792.1"/>
    <property type="match status" value="1"/>
</dbReference>
<dbReference type="NCBIfam" id="NF010783">
    <property type="entry name" value="PRK14186.1"/>
    <property type="match status" value="1"/>
</dbReference>
<dbReference type="PANTHER" id="PTHR48099:SF5">
    <property type="entry name" value="C-1-TETRAHYDROFOLATE SYNTHASE, CYTOPLASMIC"/>
    <property type="match status" value="1"/>
</dbReference>
<dbReference type="PANTHER" id="PTHR48099">
    <property type="entry name" value="C-1-TETRAHYDROFOLATE SYNTHASE, CYTOPLASMIC-RELATED"/>
    <property type="match status" value="1"/>
</dbReference>
<dbReference type="Pfam" id="PF00763">
    <property type="entry name" value="THF_DHG_CYH"/>
    <property type="match status" value="1"/>
</dbReference>
<dbReference type="Pfam" id="PF02882">
    <property type="entry name" value="THF_DHG_CYH_C"/>
    <property type="match status" value="1"/>
</dbReference>
<dbReference type="PRINTS" id="PR00085">
    <property type="entry name" value="THFDHDRGNASE"/>
</dbReference>
<dbReference type="SUPFAM" id="SSF53223">
    <property type="entry name" value="Aminoacid dehydrogenase-like, N-terminal domain"/>
    <property type="match status" value="1"/>
</dbReference>
<dbReference type="SUPFAM" id="SSF51735">
    <property type="entry name" value="NAD(P)-binding Rossmann-fold domains"/>
    <property type="match status" value="1"/>
</dbReference>
<dbReference type="PROSITE" id="PS00766">
    <property type="entry name" value="THF_DHG_CYH_1"/>
    <property type="match status" value="1"/>
</dbReference>
<dbReference type="PROSITE" id="PS00767">
    <property type="entry name" value="THF_DHG_CYH_2"/>
    <property type="match status" value="1"/>
</dbReference>
<sequence>MAAKIIDGKTIAQQVRSEVAQKVQARVAAGLRAPGLAVVLVGSNPASQIYVASKRKACDEVGFVSRSYDLPETTSEAELLALIDTLNADNTIDGILVQLPLPAGIDNVKVLERIAPDKDVDGFHPYNVGRLCQRAPRLRPCTPRGIVTLLERYNIDTYGLNAVVIGASNIVGRPMSMELLLAGCTTTVTHRFTKDLRHHVEHADLLIVAVGKPGFIPGEWIKEGAIVIDVGINRLENGKVVGDVVFDEAAARASYITPVPGGVGPMTVATLIENTLQACIEYHDPQGK</sequence>
<organism>
    <name type="scientific">Salmonella paratyphi A (strain AKU_12601)</name>
    <dbReference type="NCBI Taxonomy" id="554290"/>
    <lineage>
        <taxon>Bacteria</taxon>
        <taxon>Pseudomonadati</taxon>
        <taxon>Pseudomonadota</taxon>
        <taxon>Gammaproteobacteria</taxon>
        <taxon>Enterobacterales</taxon>
        <taxon>Enterobacteriaceae</taxon>
        <taxon>Salmonella</taxon>
    </lineage>
</organism>
<comment type="function">
    <text evidence="1">Catalyzes the oxidation of 5,10-methylenetetrahydrofolate to 5,10-methenyltetrahydrofolate and then the hydrolysis of 5,10-methenyltetrahydrofolate to 10-formyltetrahydrofolate.</text>
</comment>
<comment type="catalytic activity">
    <reaction evidence="1">
        <text>(6R)-5,10-methylene-5,6,7,8-tetrahydrofolate + NADP(+) = (6R)-5,10-methenyltetrahydrofolate + NADPH</text>
        <dbReference type="Rhea" id="RHEA:22812"/>
        <dbReference type="ChEBI" id="CHEBI:15636"/>
        <dbReference type="ChEBI" id="CHEBI:57455"/>
        <dbReference type="ChEBI" id="CHEBI:57783"/>
        <dbReference type="ChEBI" id="CHEBI:58349"/>
        <dbReference type="EC" id="1.5.1.5"/>
    </reaction>
</comment>
<comment type="catalytic activity">
    <reaction evidence="1">
        <text>(6R)-5,10-methenyltetrahydrofolate + H2O = (6R)-10-formyltetrahydrofolate + H(+)</text>
        <dbReference type="Rhea" id="RHEA:23700"/>
        <dbReference type="ChEBI" id="CHEBI:15377"/>
        <dbReference type="ChEBI" id="CHEBI:15378"/>
        <dbReference type="ChEBI" id="CHEBI:57455"/>
        <dbReference type="ChEBI" id="CHEBI:195366"/>
        <dbReference type="EC" id="3.5.4.9"/>
    </reaction>
</comment>
<comment type="pathway">
    <text evidence="1">One-carbon metabolism; tetrahydrofolate interconversion.</text>
</comment>
<comment type="subunit">
    <text evidence="1">Homodimer.</text>
</comment>
<comment type="similarity">
    <text evidence="1">Belongs to the tetrahydrofolate dehydrogenase/cyclohydrolase family.</text>
</comment>
<reference key="1">
    <citation type="journal article" date="2009" name="BMC Genomics">
        <title>Pseudogene accumulation in the evolutionary histories of Salmonella enterica serovars Paratyphi A and Typhi.</title>
        <authorList>
            <person name="Holt K.E."/>
            <person name="Thomson N.R."/>
            <person name="Wain J."/>
            <person name="Langridge G.C."/>
            <person name="Hasan R."/>
            <person name="Bhutta Z.A."/>
            <person name="Quail M.A."/>
            <person name="Norbertczak H."/>
            <person name="Walker D."/>
            <person name="Simmonds M."/>
            <person name="White B."/>
            <person name="Bason N."/>
            <person name="Mungall K."/>
            <person name="Dougan G."/>
            <person name="Parkhill J."/>
        </authorList>
    </citation>
    <scope>NUCLEOTIDE SEQUENCE [LARGE SCALE GENOMIC DNA]</scope>
    <source>
        <strain>AKU_12601</strain>
    </source>
</reference>
<feature type="chain" id="PRO_1000196801" description="Bifunctional protein FolD">
    <location>
        <begin position="1"/>
        <end position="288"/>
    </location>
</feature>
<feature type="binding site" evidence="1">
    <location>
        <begin position="166"/>
        <end position="168"/>
    </location>
    <ligand>
        <name>NADP(+)</name>
        <dbReference type="ChEBI" id="CHEBI:58349"/>
    </ligand>
</feature>
<feature type="binding site" evidence="1">
    <location>
        <position position="232"/>
    </location>
    <ligand>
        <name>NADP(+)</name>
        <dbReference type="ChEBI" id="CHEBI:58349"/>
    </ligand>
</feature>
<name>FOLD_SALPK</name>
<protein>
    <recommendedName>
        <fullName evidence="1">Bifunctional protein FolD</fullName>
    </recommendedName>
    <domain>
        <recommendedName>
            <fullName evidence="1">Methylenetetrahydrofolate dehydrogenase</fullName>
            <ecNumber evidence="1">1.5.1.5</ecNumber>
        </recommendedName>
    </domain>
    <domain>
        <recommendedName>
            <fullName evidence="1">Methenyltetrahydrofolate cyclohydrolase</fullName>
            <ecNumber evidence="1">3.5.4.9</ecNumber>
        </recommendedName>
    </domain>
</protein>
<evidence type="ECO:0000255" key="1">
    <source>
        <dbReference type="HAMAP-Rule" id="MF_01576"/>
    </source>
</evidence>
<keyword id="KW-0028">Amino-acid biosynthesis</keyword>
<keyword id="KW-0368">Histidine biosynthesis</keyword>
<keyword id="KW-0378">Hydrolase</keyword>
<keyword id="KW-0486">Methionine biosynthesis</keyword>
<keyword id="KW-0511">Multifunctional enzyme</keyword>
<keyword id="KW-0521">NADP</keyword>
<keyword id="KW-0554">One-carbon metabolism</keyword>
<keyword id="KW-0560">Oxidoreductase</keyword>
<keyword id="KW-0658">Purine biosynthesis</keyword>